<feature type="chain" id="PRO_0000350375" description="Probable dual-specificity RNA methyltransferase RlmN">
    <location>
        <begin position="1"/>
        <end position="399"/>
    </location>
</feature>
<feature type="domain" description="Radical SAM core" evidence="2">
    <location>
        <begin position="108"/>
        <end position="385"/>
    </location>
</feature>
<feature type="active site" description="Proton acceptor" evidence="1">
    <location>
        <position position="102"/>
    </location>
</feature>
<feature type="active site" description="S-methylcysteine intermediate" evidence="1">
    <location>
        <position position="390"/>
    </location>
</feature>
<feature type="binding site" evidence="1">
    <location>
        <position position="122"/>
    </location>
    <ligand>
        <name>[4Fe-4S] cluster</name>
        <dbReference type="ChEBI" id="CHEBI:49883"/>
        <note>4Fe-4S-S-AdoMet</note>
    </ligand>
</feature>
<feature type="binding site" evidence="1">
    <location>
        <position position="126"/>
    </location>
    <ligand>
        <name>[4Fe-4S] cluster</name>
        <dbReference type="ChEBI" id="CHEBI:49883"/>
        <note>4Fe-4S-S-AdoMet</note>
    </ligand>
</feature>
<feature type="binding site" evidence="1">
    <location>
        <position position="129"/>
    </location>
    <ligand>
        <name>[4Fe-4S] cluster</name>
        <dbReference type="ChEBI" id="CHEBI:49883"/>
        <note>4Fe-4S-S-AdoMet</note>
    </ligand>
</feature>
<feature type="binding site" evidence="1">
    <location>
        <begin position="207"/>
        <end position="208"/>
    </location>
    <ligand>
        <name>S-adenosyl-L-methionine</name>
        <dbReference type="ChEBI" id="CHEBI:59789"/>
    </ligand>
</feature>
<feature type="binding site" evidence="1">
    <location>
        <position position="239"/>
    </location>
    <ligand>
        <name>S-adenosyl-L-methionine</name>
        <dbReference type="ChEBI" id="CHEBI:59789"/>
    </ligand>
</feature>
<feature type="binding site" evidence="1">
    <location>
        <begin position="262"/>
        <end position="264"/>
    </location>
    <ligand>
        <name>S-adenosyl-L-methionine</name>
        <dbReference type="ChEBI" id="CHEBI:59789"/>
    </ligand>
</feature>
<feature type="binding site" evidence="1">
    <location>
        <position position="347"/>
    </location>
    <ligand>
        <name>S-adenosyl-L-methionine</name>
        <dbReference type="ChEBI" id="CHEBI:59789"/>
    </ligand>
</feature>
<feature type="disulfide bond" description="(transient)" evidence="1">
    <location>
        <begin position="115"/>
        <end position="390"/>
    </location>
</feature>
<name>RLMN_ROSCS</name>
<dbReference type="EC" id="2.1.1.192" evidence="1"/>
<dbReference type="EMBL" id="CP000804">
    <property type="protein sequence ID" value="ABU59632.1"/>
    <property type="molecule type" value="Genomic_DNA"/>
</dbReference>
<dbReference type="SMR" id="A7NPY6"/>
<dbReference type="STRING" id="383372.Rcas_3583"/>
<dbReference type="KEGG" id="rca:Rcas_3583"/>
<dbReference type="eggNOG" id="COG0820">
    <property type="taxonomic scope" value="Bacteria"/>
</dbReference>
<dbReference type="HOGENOM" id="CLU_029101_0_2_0"/>
<dbReference type="OrthoDB" id="9793973at2"/>
<dbReference type="Proteomes" id="UP000000263">
    <property type="component" value="Chromosome"/>
</dbReference>
<dbReference type="GO" id="GO:0005737">
    <property type="term" value="C:cytoplasm"/>
    <property type="evidence" value="ECO:0007669"/>
    <property type="project" value="UniProtKB-SubCell"/>
</dbReference>
<dbReference type="GO" id="GO:0051539">
    <property type="term" value="F:4 iron, 4 sulfur cluster binding"/>
    <property type="evidence" value="ECO:0007669"/>
    <property type="project" value="UniProtKB-UniRule"/>
</dbReference>
<dbReference type="GO" id="GO:0046872">
    <property type="term" value="F:metal ion binding"/>
    <property type="evidence" value="ECO:0007669"/>
    <property type="project" value="UniProtKB-KW"/>
</dbReference>
<dbReference type="GO" id="GO:0070040">
    <property type="term" value="F:rRNA (adenine(2503)-C2-)-methyltransferase activity"/>
    <property type="evidence" value="ECO:0007669"/>
    <property type="project" value="UniProtKB-UniRule"/>
</dbReference>
<dbReference type="GO" id="GO:0019843">
    <property type="term" value="F:rRNA binding"/>
    <property type="evidence" value="ECO:0007669"/>
    <property type="project" value="UniProtKB-UniRule"/>
</dbReference>
<dbReference type="GO" id="GO:0002935">
    <property type="term" value="F:tRNA (adenine(37)-C2)-methyltransferase activity"/>
    <property type="evidence" value="ECO:0007669"/>
    <property type="project" value="UniProtKB-UniRule"/>
</dbReference>
<dbReference type="GO" id="GO:0000049">
    <property type="term" value="F:tRNA binding"/>
    <property type="evidence" value="ECO:0007669"/>
    <property type="project" value="UniProtKB-UniRule"/>
</dbReference>
<dbReference type="GO" id="GO:0070475">
    <property type="term" value="P:rRNA base methylation"/>
    <property type="evidence" value="ECO:0007669"/>
    <property type="project" value="UniProtKB-UniRule"/>
</dbReference>
<dbReference type="GO" id="GO:0030488">
    <property type="term" value="P:tRNA methylation"/>
    <property type="evidence" value="ECO:0007669"/>
    <property type="project" value="UniProtKB-UniRule"/>
</dbReference>
<dbReference type="Gene3D" id="1.10.150.530">
    <property type="match status" value="1"/>
</dbReference>
<dbReference type="Gene3D" id="3.20.20.70">
    <property type="entry name" value="Aldolase class I"/>
    <property type="match status" value="1"/>
</dbReference>
<dbReference type="HAMAP" id="MF_01849">
    <property type="entry name" value="RNA_methyltr_RlmN"/>
    <property type="match status" value="1"/>
</dbReference>
<dbReference type="InterPro" id="IPR013785">
    <property type="entry name" value="Aldolase_TIM"/>
</dbReference>
<dbReference type="InterPro" id="IPR040072">
    <property type="entry name" value="Methyltransferase_A"/>
</dbReference>
<dbReference type="InterPro" id="IPR048641">
    <property type="entry name" value="RlmN_N"/>
</dbReference>
<dbReference type="InterPro" id="IPR027492">
    <property type="entry name" value="RNA_MTrfase_RlmN"/>
</dbReference>
<dbReference type="InterPro" id="IPR004383">
    <property type="entry name" value="rRNA_lsu_MTrfase_RlmN/Cfr"/>
</dbReference>
<dbReference type="InterPro" id="IPR007197">
    <property type="entry name" value="rSAM"/>
</dbReference>
<dbReference type="NCBIfam" id="NF011031">
    <property type="entry name" value="PRK14461.1"/>
    <property type="match status" value="1"/>
</dbReference>
<dbReference type="PANTHER" id="PTHR30544">
    <property type="entry name" value="23S RRNA METHYLTRANSFERASE"/>
    <property type="match status" value="1"/>
</dbReference>
<dbReference type="PANTHER" id="PTHR30544:SF5">
    <property type="entry name" value="RADICAL SAM CORE DOMAIN-CONTAINING PROTEIN"/>
    <property type="match status" value="1"/>
</dbReference>
<dbReference type="Pfam" id="PF04055">
    <property type="entry name" value="Radical_SAM"/>
    <property type="match status" value="1"/>
</dbReference>
<dbReference type="Pfam" id="PF21016">
    <property type="entry name" value="RlmN_N"/>
    <property type="match status" value="1"/>
</dbReference>
<dbReference type="PIRSF" id="PIRSF006004">
    <property type="entry name" value="CHP00048"/>
    <property type="match status" value="1"/>
</dbReference>
<dbReference type="SFLD" id="SFLDF00275">
    <property type="entry name" value="adenosine_C2_methyltransferase"/>
    <property type="match status" value="1"/>
</dbReference>
<dbReference type="SFLD" id="SFLDG01062">
    <property type="entry name" value="methyltransferase_(Class_A)"/>
    <property type="match status" value="1"/>
</dbReference>
<dbReference type="SUPFAM" id="SSF102114">
    <property type="entry name" value="Radical SAM enzymes"/>
    <property type="match status" value="1"/>
</dbReference>
<dbReference type="PROSITE" id="PS51918">
    <property type="entry name" value="RADICAL_SAM"/>
    <property type="match status" value="1"/>
</dbReference>
<gene>
    <name evidence="1" type="primary">rlmN</name>
    <name type="ordered locus">Rcas_3583</name>
</gene>
<proteinExistence type="inferred from homology"/>
<protein>
    <recommendedName>
        <fullName evidence="1">Probable dual-specificity RNA methyltransferase RlmN</fullName>
        <ecNumber evidence="1">2.1.1.192</ecNumber>
    </recommendedName>
    <alternativeName>
        <fullName evidence="1">23S rRNA (adenine(2503)-C(2))-methyltransferase</fullName>
    </alternativeName>
    <alternativeName>
        <fullName evidence="1">23S rRNA m2A2503 methyltransferase</fullName>
    </alternativeName>
    <alternativeName>
        <fullName evidence="1">Ribosomal RNA large subunit methyltransferase N</fullName>
    </alternativeName>
    <alternativeName>
        <fullName evidence="1">tRNA (adenine(37)-C(2))-methyltransferase</fullName>
    </alternativeName>
    <alternativeName>
        <fullName evidence="1">tRNA m2A37 methyltransferase</fullName>
    </alternativeName>
</protein>
<comment type="function">
    <text evidence="1">Specifically methylates position 2 of adenine 2503 in 23S rRNA and position 2 of adenine 37 in tRNAs.</text>
</comment>
<comment type="catalytic activity">
    <reaction evidence="1">
        <text>adenosine(2503) in 23S rRNA + 2 reduced [2Fe-2S]-[ferredoxin] + 2 S-adenosyl-L-methionine = 2-methyladenosine(2503) in 23S rRNA + 5'-deoxyadenosine + L-methionine + 2 oxidized [2Fe-2S]-[ferredoxin] + S-adenosyl-L-homocysteine</text>
        <dbReference type="Rhea" id="RHEA:42916"/>
        <dbReference type="Rhea" id="RHEA-COMP:10000"/>
        <dbReference type="Rhea" id="RHEA-COMP:10001"/>
        <dbReference type="Rhea" id="RHEA-COMP:10152"/>
        <dbReference type="Rhea" id="RHEA-COMP:10282"/>
        <dbReference type="ChEBI" id="CHEBI:17319"/>
        <dbReference type="ChEBI" id="CHEBI:33737"/>
        <dbReference type="ChEBI" id="CHEBI:33738"/>
        <dbReference type="ChEBI" id="CHEBI:57844"/>
        <dbReference type="ChEBI" id="CHEBI:57856"/>
        <dbReference type="ChEBI" id="CHEBI:59789"/>
        <dbReference type="ChEBI" id="CHEBI:74411"/>
        <dbReference type="ChEBI" id="CHEBI:74497"/>
        <dbReference type="EC" id="2.1.1.192"/>
    </reaction>
</comment>
<comment type="catalytic activity">
    <reaction evidence="1">
        <text>adenosine(37) in tRNA + 2 reduced [2Fe-2S]-[ferredoxin] + 2 S-adenosyl-L-methionine = 2-methyladenosine(37) in tRNA + 5'-deoxyadenosine + L-methionine + 2 oxidized [2Fe-2S]-[ferredoxin] + S-adenosyl-L-homocysteine</text>
        <dbReference type="Rhea" id="RHEA:43332"/>
        <dbReference type="Rhea" id="RHEA-COMP:10000"/>
        <dbReference type="Rhea" id="RHEA-COMP:10001"/>
        <dbReference type="Rhea" id="RHEA-COMP:10162"/>
        <dbReference type="Rhea" id="RHEA-COMP:10485"/>
        <dbReference type="ChEBI" id="CHEBI:17319"/>
        <dbReference type="ChEBI" id="CHEBI:33737"/>
        <dbReference type="ChEBI" id="CHEBI:33738"/>
        <dbReference type="ChEBI" id="CHEBI:57844"/>
        <dbReference type="ChEBI" id="CHEBI:57856"/>
        <dbReference type="ChEBI" id="CHEBI:59789"/>
        <dbReference type="ChEBI" id="CHEBI:74411"/>
        <dbReference type="ChEBI" id="CHEBI:74497"/>
        <dbReference type="EC" id="2.1.1.192"/>
    </reaction>
</comment>
<comment type="cofactor">
    <cofactor evidence="1">
        <name>[4Fe-4S] cluster</name>
        <dbReference type="ChEBI" id="CHEBI:49883"/>
    </cofactor>
    <text evidence="1">Binds 1 [4Fe-4S] cluster. The cluster is coordinated with 3 cysteines and an exchangeable S-adenosyl-L-methionine.</text>
</comment>
<comment type="subcellular location">
    <subcellularLocation>
        <location evidence="1">Cytoplasm</location>
    </subcellularLocation>
</comment>
<comment type="miscellaneous">
    <text evidence="1">Reaction proceeds by a ping-pong mechanism involving intermediate methylation of a conserved cysteine residue.</text>
</comment>
<comment type="similarity">
    <text evidence="1">Belongs to the radical SAM superfamily. RlmN family.</text>
</comment>
<sequence>MTALPVTNRDTLPNLYDLSLAEMERLLTDWGQPTYRARQVFRQLYVNLADTPLAMTDLPLALRERLANETRLAPVTPEQVQTADNGLTRKALFRLPNGALVESVLMIYLDRATVCVSTQAGCAMGCVFCATGTLGLLRNLSPGEIVAQVVWAAREMRRLAGRPPRPTMRQPEDDAWWSPDDLENDAPSVPEVSSVSHVTNIVFMGMGEPFATYDRWWRAVEIIHDPRGLNIGARSMTVSTVGLVPGIRRLATETLPINLAVSLHAPDDDLRSALMPINRRYPLAVLLDATRDYLAATGRRVSFEYVLLQGKNDEPEHAAKLAALLRGEAGPAGLPLHLVHVNLIPWNPVPGMPLGRSERRRVLTFQRILRERGIACTVRVERGVAIAAACGQLAGGVAC</sequence>
<evidence type="ECO:0000255" key="1">
    <source>
        <dbReference type="HAMAP-Rule" id="MF_01849"/>
    </source>
</evidence>
<evidence type="ECO:0000255" key="2">
    <source>
        <dbReference type="PROSITE-ProRule" id="PRU01266"/>
    </source>
</evidence>
<keyword id="KW-0004">4Fe-4S</keyword>
<keyword id="KW-0963">Cytoplasm</keyword>
<keyword id="KW-1015">Disulfide bond</keyword>
<keyword id="KW-0408">Iron</keyword>
<keyword id="KW-0411">Iron-sulfur</keyword>
<keyword id="KW-0479">Metal-binding</keyword>
<keyword id="KW-0489">Methyltransferase</keyword>
<keyword id="KW-1185">Reference proteome</keyword>
<keyword id="KW-0698">rRNA processing</keyword>
<keyword id="KW-0949">S-adenosyl-L-methionine</keyword>
<keyword id="KW-0808">Transferase</keyword>
<keyword id="KW-0819">tRNA processing</keyword>
<reference key="1">
    <citation type="submission" date="2007-08" db="EMBL/GenBank/DDBJ databases">
        <title>Complete sequence of Roseiflexus castenholzii DSM 13941.</title>
        <authorList>
            <consortium name="US DOE Joint Genome Institute"/>
            <person name="Copeland A."/>
            <person name="Lucas S."/>
            <person name="Lapidus A."/>
            <person name="Barry K."/>
            <person name="Glavina del Rio T."/>
            <person name="Dalin E."/>
            <person name="Tice H."/>
            <person name="Pitluck S."/>
            <person name="Thompson L.S."/>
            <person name="Brettin T."/>
            <person name="Bruce D."/>
            <person name="Detter J.C."/>
            <person name="Han C."/>
            <person name="Tapia R."/>
            <person name="Schmutz J."/>
            <person name="Larimer F."/>
            <person name="Land M."/>
            <person name="Hauser L."/>
            <person name="Kyrpides N."/>
            <person name="Mikhailova N."/>
            <person name="Bryant D.A."/>
            <person name="Hanada S."/>
            <person name="Tsukatani Y."/>
            <person name="Richardson P."/>
        </authorList>
    </citation>
    <scope>NUCLEOTIDE SEQUENCE [LARGE SCALE GENOMIC DNA]</scope>
    <source>
        <strain>DSM 13941 / HLO8</strain>
    </source>
</reference>
<organism>
    <name type="scientific">Roseiflexus castenholzii (strain DSM 13941 / HLO8)</name>
    <dbReference type="NCBI Taxonomy" id="383372"/>
    <lineage>
        <taxon>Bacteria</taxon>
        <taxon>Bacillati</taxon>
        <taxon>Chloroflexota</taxon>
        <taxon>Chloroflexia</taxon>
        <taxon>Chloroflexales</taxon>
        <taxon>Roseiflexineae</taxon>
        <taxon>Roseiflexaceae</taxon>
        <taxon>Roseiflexus</taxon>
    </lineage>
</organism>
<accession>A7NPY6</accession>